<comment type="function">
    <text evidence="1">Cell wall formation. Catalyzes the addition of glutamate to the nucleotide precursor UDP-N-acetylmuramoyl-L-alanine (UMA).</text>
</comment>
<comment type="catalytic activity">
    <reaction>
        <text>UDP-N-acetyl-alpha-D-muramoyl-L-alanine + D-glutamate + ATP = UDP-N-acetyl-alpha-D-muramoyl-L-alanyl-D-glutamate + ADP + phosphate + H(+)</text>
        <dbReference type="Rhea" id="RHEA:16429"/>
        <dbReference type="ChEBI" id="CHEBI:15378"/>
        <dbReference type="ChEBI" id="CHEBI:29986"/>
        <dbReference type="ChEBI" id="CHEBI:30616"/>
        <dbReference type="ChEBI" id="CHEBI:43474"/>
        <dbReference type="ChEBI" id="CHEBI:83898"/>
        <dbReference type="ChEBI" id="CHEBI:83900"/>
        <dbReference type="ChEBI" id="CHEBI:456216"/>
        <dbReference type="EC" id="6.3.2.9"/>
    </reaction>
</comment>
<comment type="pathway">
    <text>Cell wall biogenesis; peptidoglycan biosynthesis.</text>
</comment>
<comment type="subcellular location">
    <subcellularLocation>
        <location evidence="1">Cytoplasm</location>
    </subcellularLocation>
</comment>
<comment type="similarity">
    <text evidence="3">Belongs to the MurCDEF family.</text>
</comment>
<accession>Q9ZDC2</accession>
<evidence type="ECO:0000250" key="1"/>
<evidence type="ECO:0000255" key="2"/>
<evidence type="ECO:0000305" key="3"/>
<dbReference type="EC" id="6.3.2.9"/>
<dbReference type="EMBL" id="AJ235271">
    <property type="protein sequence ID" value="CAA14867.1"/>
    <property type="molecule type" value="Genomic_DNA"/>
</dbReference>
<dbReference type="PIR" id="A71699">
    <property type="entry name" value="A71699"/>
</dbReference>
<dbReference type="RefSeq" id="NP_220791.1">
    <property type="nucleotide sequence ID" value="NC_000963.1"/>
</dbReference>
<dbReference type="RefSeq" id="WP_004597598.1">
    <property type="nucleotide sequence ID" value="NC_000963.1"/>
</dbReference>
<dbReference type="SMR" id="Q9ZDC2"/>
<dbReference type="STRING" id="272947.gene:17555490"/>
<dbReference type="EnsemblBacteria" id="CAA14867">
    <property type="protein sequence ID" value="CAA14867"/>
    <property type="gene ID" value="CAA14867"/>
</dbReference>
<dbReference type="GeneID" id="57569535"/>
<dbReference type="KEGG" id="rpr:RP410"/>
<dbReference type="PATRIC" id="fig|272947.5.peg.423"/>
<dbReference type="eggNOG" id="COG0771">
    <property type="taxonomic scope" value="Bacteria"/>
</dbReference>
<dbReference type="HOGENOM" id="CLU_032540_3_0_5"/>
<dbReference type="OrthoDB" id="9809796at2"/>
<dbReference type="UniPathway" id="UPA00219"/>
<dbReference type="Proteomes" id="UP000002480">
    <property type="component" value="Chromosome"/>
</dbReference>
<dbReference type="GO" id="GO:0005737">
    <property type="term" value="C:cytoplasm"/>
    <property type="evidence" value="ECO:0007669"/>
    <property type="project" value="UniProtKB-SubCell"/>
</dbReference>
<dbReference type="GO" id="GO:0005524">
    <property type="term" value="F:ATP binding"/>
    <property type="evidence" value="ECO:0007669"/>
    <property type="project" value="UniProtKB-UniRule"/>
</dbReference>
<dbReference type="GO" id="GO:0004326">
    <property type="term" value="F:tetrahydrofolylpolyglutamate synthase activity"/>
    <property type="evidence" value="ECO:0007669"/>
    <property type="project" value="InterPro"/>
</dbReference>
<dbReference type="GO" id="GO:0008764">
    <property type="term" value="F:UDP-N-acetylmuramoylalanine-D-glutamate ligase activity"/>
    <property type="evidence" value="ECO:0007669"/>
    <property type="project" value="UniProtKB-UniRule"/>
</dbReference>
<dbReference type="GO" id="GO:0051301">
    <property type="term" value="P:cell division"/>
    <property type="evidence" value="ECO:0007669"/>
    <property type="project" value="UniProtKB-KW"/>
</dbReference>
<dbReference type="GO" id="GO:0071555">
    <property type="term" value="P:cell wall organization"/>
    <property type="evidence" value="ECO:0007669"/>
    <property type="project" value="UniProtKB-KW"/>
</dbReference>
<dbReference type="GO" id="GO:0009252">
    <property type="term" value="P:peptidoglycan biosynthetic process"/>
    <property type="evidence" value="ECO:0007669"/>
    <property type="project" value="UniProtKB-UniRule"/>
</dbReference>
<dbReference type="GO" id="GO:0008360">
    <property type="term" value="P:regulation of cell shape"/>
    <property type="evidence" value="ECO:0007669"/>
    <property type="project" value="UniProtKB-KW"/>
</dbReference>
<dbReference type="Gene3D" id="3.90.190.20">
    <property type="entry name" value="Mur ligase, C-terminal domain"/>
    <property type="match status" value="1"/>
</dbReference>
<dbReference type="Gene3D" id="3.40.1190.10">
    <property type="entry name" value="Mur-like, catalytic domain"/>
    <property type="match status" value="1"/>
</dbReference>
<dbReference type="Gene3D" id="3.40.50.720">
    <property type="entry name" value="NAD(P)-binding Rossmann-like Domain"/>
    <property type="match status" value="1"/>
</dbReference>
<dbReference type="HAMAP" id="MF_00639">
    <property type="entry name" value="MurD"/>
    <property type="match status" value="1"/>
</dbReference>
<dbReference type="InterPro" id="IPR018109">
    <property type="entry name" value="Folylpolyglutamate_synth_CS"/>
</dbReference>
<dbReference type="InterPro" id="IPR036565">
    <property type="entry name" value="Mur-like_cat_sf"/>
</dbReference>
<dbReference type="InterPro" id="IPR036615">
    <property type="entry name" value="Mur_ligase_C_dom_sf"/>
</dbReference>
<dbReference type="InterPro" id="IPR013221">
    <property type="entry name" value="Mur_ligase_cen"/>
</dbReference>
<dbReference type="InterPro" id="IPR005762">
    <property type="entry name" value="MurD"/>
</dbReference>
<dbReference type="NCBIfam" id="TIGR01087">
    <property type="entry name" value="murD"/>
    <property type="match status" value="1"/>
</dbReference>
<dbReference type="PANTHER" id="PTHR43692">
    <property type="entry name" value="UDP-N-ACETYLMURAMOYLALANINE--D-GLUTAMATE LIGASE"/>
    <property type="match status" value="1"/>
</dbReference>
<dbReference type="PANTHER" id="PTHR43692:SF1">
    <property type="entry name" value="UDP-N-ACETYLMURAMOYLALANINE--D-GLUTAMATE LIGASE"/>
    <property type="match status" value="1"/>
</dbReference>
<dbReference type="Pfam" id="PF08245">
    <property type="entry name" value="Mur_ligase_M"/>
    <property type="match status" value="1"/>
</dbReference>
<dbReference type="Pfam" id="PF21799">
    <property type="entry name" value="MurD-like_N"/>
    <property type="match status" value="1"/>
</dbReference>
<dbReference type="SUPFAM" id="SSF51984">
    <property type="entry name" value="MurCD N-terminal domain"/>
    <property type="match status" value="1"/>
</dbReference>
<dbReference type="SUPFAM" id="SSF53623">
    <property type="entry name" value="MurD-like peptide ligases, catalytic domain"/>
    <property type="match status" value="1"/>
</dbReference>
<dbReference type="SUPFAM" id="SSF53244">
    <property type="entry name" value="MurD-like peptide ligases, peptide-binding domain"/>
    <property type="match status" value="1"/>
</dbReference>
<reference key="1">
    <citation type="journal article" date="1998" name="Nature">
        <title>The genome sequence of Rickettsia prowazekii and the origin of mitochondria.</title>
        <authorList>
            <person name="Andersson S.G.E."/>
            <person name="Zomorodipour A."/>
            <person name="Andersson J.O."/>
            <person name="Sicheritz-Ponten T."/>
            <person name="Alsmark U.C.M."/>
            <person name="Podowski R.M."/>
            <person name="Naeslund A.K."/>
            <person name="Eriksson A.-S."/>
            <person name="Winkler H.H."/>
            <person name="Kurland C.G."/>
        </authorList>
    </citation>
    <scope>NUCLEOTIDE SEQUENCE [LARGE SCALE GENOMIC DNA]</scope>
    <source>
        <strain>Madrid E</strain>
    </source>
</reference>
<protein>
    <recommendedName>
        <fullName>UDP-N-acetylmuramoylalanine--D-glutamate ligase</fullName>
        <ecNumber>6.3.2.9</ecNumber>
    </recommendedName>
    <alternativeName>
        <fullName>D-glutamic acid-adding enzyme</fullName>
    </alternativeName>
    <alternativeName>
        <fullName>UDP-N-acetylmuramoyl-L-alanyl-D-glutamate synthetase</fullName>
    </alternativeName>
</protein>
<feature type="chain" id="PRO_0000109073" description="UDP-N-acetylmuramoylalanine--D-glutamate ligase">
    <location>
        <begin position="1"/>
        <end position="445"/>
    </location>
</feature>
<feature type="binding site" evidence="2">
    <location>
        <begin position="111"/>
        <end position="117"/>
    </location>
    <ligand>
        <name>ATP</name>
        <dbReference type="ChEBI" id="CHEBI:30616"/>
    </ligand>
</feature>
<organism>
    <name type="scientific">Rickettsia prowazekii (strain Madrid E)</name>
    <dbReference type="NCBI Taxonomy" id="272947"/>
    <lineage>
        <taxon>Bacteria</taxon>
        <taxon>Pseudomonadati</taxon>
        <taxon>Pseudomonadota</taxon>
        <taxon>Alphaproteobacteria</taxon>
        <taxon>Rickettsiales</taxon>
        <taxon>Rickettsiaceae</taxon>
        <taxon>Rickettsieae</taxon>
        <taxon>Rickettsia</taxon>
        <taxon>typhus group</taxon>
    </lineage>
</organism>
<proteinExistence type="inferred from homology"/>
<keyword id="KW-0067">ATP-binding</keyword>
<keyword id="KW-0131">Cell cycle</keyword>
<keyword id="KW-0132">Cell division</keyword>
<keyword id="KW-0133">Cell shape</keyword>
<keyword id="KW-0961">Cell wall biogenesis/degradation</keyword>
<keyword id="KW-0963">Cytoplasm</keyword>
<keyword id="KW-0436">Ligase</keyword>
<keyword id="KW-0547">Nucleotide-binding</keyword>
<keyword id="KW-0573">Peptidoglycan synthesis</keyword>
<keyword id="KW-1185">Reference proteome</keyword>
<gene>
    <name type="primary">murD</name>
    <name type="ordered locus">RP410</name>
</gene>
<sequence length="445" mass="50130">MNAYKKQKIGIFGLGKTGISVYEELKNKYDLIVYDDLEANRDIFKELFGNNLITVLSDSRWQDLDKIVLSPGVPLTHEVVRIAHHFNIPIISDIDLFFEKSKNLKFIAITGTNGKSTTTALISHILNSNGLDYPVAGNIGVPALQAKASNEGYVLELSSFQLDLVKSFTVKVAVLLNITPDHLDRYQDMNDYIAAKAKIFDRMDKDSYAVINIDNDYCRKIFVLLQKDQSIKLIPFSVTKILKNGISIVDDKIHDNDLTYKLPLNKNLQGLHNCENIAASYAVAKIIGLESKKILESISSFQSLHHRMQYIGSINNISFYNDSKATNAISALQSIKALDNIYWLAGGIPKEGGIEGIKPYFNKIKKAYFYGQAKAMFANTAKNIIDFVICDNLEYAFNIAYKDAVSDTTEVKNILLAPSCSSYDQFKNFEERGELFIKLSKRHWQ</sequence>
<name>MURD_RICPR</name>